<dbReference type="EC" id="2.5.1.3" evidence="1"/>
<dbReference type="EMBL" id="CP000680">
    <property type="protein sequence ID" value="ABP86521.1"/>
    <property type="molecule type" value="Genomic_DNA"/>
</dbReference>
<dbReference type="SMR" id="A4XYV5"/>
<dbReference type="STRING" id="399739.Pmen_3773"/>
<dbReference type="KEGG" id="pmy:Pmen_3773"/>
<dbReference type="PATRIC" id="fig|399739.8.peg.3826"/>
<dbReference type="eggNOG" id="COG0352">
    <property type="taxonomic scope" value="Bacteria"/>
</dbReference>
<dbReference type="HOGENOM" id="CLU_018272_3_1_6"/>
<dbReference type="OrthoDB" id="9789949at2"/>
<dbReference type="UniPathway" id="UPA00060">
    <property type="reaction ID" value="UER00141"/>
</dbReference>
<dbReference type="GO" id="GO:0005737">
    <property type="term" value="C:cytoplasm"/>
    <property type="evidence" value="ECO:0007669"/>
    <property type="project" value="TreeGrafter"/>
</dbReference>
<dbReference type="GO" id="GO:0000287">
    <property type="term" value="F:magnesium ion binding"/>
    <property type="evidence" value="ECO:0007669"/>
    <property type="project" value="UniProtKB-UniRule"/>
</dbReference>
<dbReference type="GO" id="GO:0004789">
    <property type="term" value="F:thiamine-phosphate diphosphorylase activity"/>
    <property type="evidence" value="ECO:0007669"/>
    <property type="project" value="UniProtKB-UniRule"/>
</dbReference>
<dbReference type="GO" id="GO:0009228">
    <property type="term" value="P:thiamine biosynthetic process"/>
    <property type="evidence" value="ECO:0007669"/>
    <property type="project" value="UniProtKB-KW"/>
</dbReference>
<dbReference type="GO" id="GO:0009229">
    <property type="term" value="P:thiamine diphosphate biosynthetic process"/>
    <property type="evidence" value="ECO:0007669"/>
    <property type="project" value="UniProtKB-UniRule"/>
</dbReference>
<dbReference type="CDD" id="cd00564">
    <property type="entry name" value="TMP_TenI"/>
    <property type="match status" value="1"/>
</dbReference>
<dbReference type="Gene3D" id="3.20.20.70">
    <property type="entry name" value="Aldolase class I"/>
    <property type="match status" value="1"/>
</dbReference>
<dbReference type="HAMAP" id="MF_00097">
    <property type="entry name" value="TMP_synthase"/>
    <property type="match status" value="1"/>
</dbReference>
<dbReference type="InterPro" id="IPR013785">
    <property type="entry name" value="Aldolase_TIM"/>
</dbReference>
<dbReference type="InterPro" id="IPR036206">
    <property type="entry name" value="ThiamineP_synth_sf"/>
</dbReference>
<dbReference type="InterPro" id="IPR022998">
    <property type="entry name" value="ThiamineP_synth_TenI"/>
</dbReference>
<dbReference type="InterPro" id="IPR034291">
    <property type="entry name" value="TMP_synthase"/>
</dbReference>
<dbReference type="NCBIfam" id="TIGR00693">
    <property type="entry name" value="thiE"/>
    <property type="match status" value="1"/>
</dbReference>
<dbReference type="PANTHER" id="PTHR20857">
    <property type="entry name" value="THIAMINE-PHOSPHATE PYROPHOSPHORYLASE"/>
    <property type="match status" value="1"/>
</dbReference>
<dbReference type="PANTHER" id="PTHR20857:SF15">
    <property type="entry name" value="THIAMINE-PHOSPHATE SYNTHASE"/>
    <property type="match status" value="1"/>
</dbReference>
<dbReference type="Pfam" id="PF02581">
    <property type="entry name" value="TMP-TENI"/>
    <property type="match status" value="1"/>
</dbReference>
<dbReference type="SUPFAM" id="SSF51391">
    <property type="entry name" value="Thiamin phosphate synthase"/>
    <property type="match status" value="1"/>
</dbReference>
<accession>A4XYV5</accession>
<name>THIE_ECTM1</name>
<sequence length="209" mass="21668">MTAALRGLYAITDTPLLAGGKLLPYAEAALIGGARLLQYRDKSGDAVRRLDEAQALAELCQRHGATLIINDDLELAAHLGVGLHLGQTDGSLAAARARLGADVVIGGTCHAQLELAERAVAEGASYIAFGRFFNSNTKPGAPAATVELLDQARTRFAQPIVAIGGVTLDNAPGLIARGASMVAVIHALFAADSALEVQDRARAFAALFD</sequence>
<reference key="1">
    <citation type="submission" date="2007-04" db="EMBL/GenBank/DDBJ databases">
        <title>Complete sequence of Pseudomonas mendocina ymp.</title>
        <authorList>
            <consortium name="US DOE Joint Genome Institute"/>
            <person name="Copeland A."/>
            <person name="Lucas S."/>
            <person name="Lapidus A."/>
            <person name="Barry K."/>
            <person name="Glavina del Rio T."/>
            <person name="Dalin E."/>
            <person name="Tice H."/>
            <person name="Pitluck S."/>
            <person name="Kiss H."/>
            <person name="Brettin T."/>
            <person name="Detter J.C."/>
            <person name="Bruce D."/>
            <person name="Han C."/>
            <person name="Schmutz J."/>
            <person name="Larimer F."/>
            <person name="Land M."/>
            <person name="Hauser L."/>
            <person name="Kyrpides N."/>
            <person name="Mikhailova N."/>
            <person name="Hersman L."/>
            <person name="Dubois J."/>
            <person name="Maurice P."/>
            <person name="Richardson P."/>
        </authorList>
    </citation>
    <scope>NUCLEOTIDE SEQUENCE [LARGE SCALE GENOMIC DNA]</scope>
    <source>
        <strain>ymp</strain>
    </source>
</reference>
<evidence type="ECO:0000255" key="1">
    <source>
        <dbReference type="HAMAP-Rule" id="MF_00097"/>
    </source>
</evidence>
<keyword id="KW-0460">Magnesium</keyword>
<keyword id="KW-0479">Metal-binding</keyword>
<keyword id="KW-0784">Thiamine biosynthesis</keyword>
<keyword id="KW-0808">Transferase</keyword>
<gene>
    <name evidence="1" type="primary">thiE</name>
    <name type="ordered locus">Pmen_3773</name>
</gene>
<protein>
    <recommendedName>
        <fullName evidence="1">Thiamine-phosphate synthase</fullName>
        <shortName evidence="1">TP synthase</shortName>
        <shortName evidence="1">TPS</shortName>
        <ecNumber evidence="1">2.5.1.3</ecNumber>
    </recommendedName>
    <alternativeName>
        <fullName evidence="1">Thiamine-phosphate pyrophosphorylase</fullName>
        <shortName evidence="1">TMP pyrophosphorylase</shortName>
        <shortName evidence="1">TMP-PPase</shortName>
    </alternativeName>
</protein>
<organism>
    <name type="scientific">Ectopseudomonas mendocina (strain ymp)</name>
    <name type="common">Pseudomonas mendocina</name>
    <dbReference type="NCBI Taxonomy" id="399739"/>
    <lineage>
        <taxon>Bacteria</taxon>
        <taxon>Pseudomonadati</taxon>
        <taxon>Pseudomonadota</taxon>
        <taxon>Gammaproteobacteria</taxon>
        <taxon>Pseudomonadales</taxon>
        <taxon>Pseudomonadaceae</taxon>
        <taxon>Ectopseudomonas</taxon>
    </lineage>
</organism>
<proteinExistence type="inferred from homology"/>
<feature type="chain" id="PRO_0000336419" description="Thiamine-phosphate synthase">
    <location>
        <begin position="1"/>
        <end position="209"/>
    </location>
</feature>
<feature type="binding site" evidence="1">
    <location>
        <begin position="38"/>
        <end position="42"/>
    </location>
    <ligand>
        <name>4-amino-2-methyl-5-(diphosphooxymethyl)pyrimidine</name>
        <dbReference type="ChEBI" id="CHEBI:57841"/>
    </ligand>
</feature>
<feature type="binding site" evidence="1">
    <location>
        <position position="70"/>
    </location>
    <ligand>
        <name>4-amino-2-methyl-5-(diphosphooxymethyl)pyrimidine</name>
        <dbReference type="ChEBI" id="CHEBI:57841"/>
    </ligand>
</feature>
<feature type="binding site" evidence="1">
    <location>
        <position position="71"/>
    </location>
    <ligand>
        <name>Mg(2+)</name>
        <dbReference type="ChEBI" id="CHEBI:18420"/>
    </ligand>
</feature>
<feature type="binding site" evidence="1">
    <location>
        <position position="89"/>
    </location>
    <ligand>
        <name>Mg(2+)</name>
        <dbReference type="ChEBI" id="CHEBI:18420"/>
    </ligand>
</feature>
<feature type="binding site" evidence="1">
    <location>
        <position position="108"/>
    </location>
    <ligand>
        <name>4-amino-2-methyl-5-(diphosphooxymethyl)pyrimidine</name>
        <dbReference type="ChEBI" id="CHEBI:57841"/>
    </ligand>
</feature>
<feature type="binding site" evidence="1">
    <location>
        <begin position="135"/>
        <end position="137"/>
    </location>
    <ligand>
        <name>2-[(2R,5Z)-2-carboxy-4-methylthiazol-5(2H)-ylidene]ethyl phosphate</name>
        <dbReference type="ChEBI" id="CHEBI:62899"/>
    </ligand>
</feature>
<feature type="binding site" evidence="1">
    <location>
        <position position="138"/>
    </location>
    <ligand>
        <name>4-amino-2-methyl-5-(diphosphooxymethyl)pyrimidine</name>
        <dbReference type="ChEBI" id="CHEBI:57841"/>
    </ligand>
</feature>
<feature type="binding site" evidence="1">
    <location>
        <position position="165"/>
    </location>
    <ligand>
        <name>2-[(2R,5Z)-2-carboxy-4-methylthiazol-5(2H)-ylidene]ethyl phosphate</name>
        <dbReference type="ChEBI" id="CHEBI:62899"/>
    </ligand>
</feature>
<comment type="function">
    <text evidence="1">Condenses 4-methyl-5-(beta-hydroxyethyl)thiazole monophosphate (THZ-P) and 2-methyl-4-amino-5-hydroxymethyl pyrimidine pyrophosphate (HMP-PP) to form thiamine monophosphate (TMP).</text>
</comment>
<comment type="catalytic activity">
    <reaction evidence="1">
        <text>2-[(2R,5Z)-2-carboxy-4-methylthiazol-5(2H)-ylidene]ethyl phosphate + 4-amino-2-methyl-5-(diphosphooxymethyl)pyrimidine + 2 H(+) = thiamine phosphate + CO2 + diphosphate</text>
        <dbReference type="Rhea" id="RHEA:47844"/>
        <dbReference type="ChEBI" id="CHEBI:15378"/>
        <dbReference type="ChEBI" id="CHEBI:16526"/>
        <dbReference type="ChEBI" id="CHEBI:33019"/>
        <dbReference type="ChEBI" id="CHEBI:37575"/>
        <dbReference type="ChEBI" id="CHEBI:57841"/>
        <dbReference type="ChEBI" id="CHEBI:62899"/>
        <dbReference type="EC" id="2.5.1.3"/>
    </reaction>
</comment>
<comment type="catalytic activity">
    <reaction evidence="1">
        <text>2-(2-carboxy-4-methylthiazol-5-yl)ethyl phosphate + 4-amino-2-methyl-5-(diphosphooxymethyl)pyrimidine + 2 H(+) = thiamine phosphate + CO2 + diphosphate</text>
        <dbReference type="Rhea" id="RHEA:47848"/>
        <dbReference type="ChEBI" id="CHEBI:15378"/>
        <dbReference type="ChEBI" id="CHEBI:16526"/>
        <dbReference type="ChEBI" id="CHEBI:33019"/>
        <dbReference type="ChEBI" id="CHEBI:37575"/>
        <dbReference type="ChEBI" id="CHEBI:57841"/>
        <dbReference type="ChEBI" id="CHEBI:62890"/>
        <dbReference type="EC" id="2.5.1.3"/>
    </reaction>
</comment>
<comment type="catalytic activity">
    <reaction evidence="1">
        <text>4-methyl-5-(2-phosphooxyethyl)-thiazole + 4-amino-2-methyl-5-(diphosphooxymethyl)pyrimidine + H(+) = thiamine phosphate + diphosphate</text>
        <dbReference type="Rhea" id="RHEA:22328"/>
        <dbReference type="ChEBI" id="CHEBI:15378"/>
        <dbReference type="ChEBI" id="CHEBI:33019"/>
        <dbReference type="ChEBI" id="CHEBI:37575"/>
        <dbReference type="ChEBI" id="CHEBI:57841"/>
        <dbReference type="ChEBI" id="CHEBI:58296"/>
        <dbReference type="EC" id="2.5.1.3"/>
    </reaction>
</comment>
<comment type="cofactor">
    <cofactor evidence="1">
        <name>Mg(2+)</name>
        <dbReference type="ChEBI" id="CHEBI:18420"/>
    </cofactor>
    <text evidence="1">Binds 1 Mg(2+) ion per subunit.</text>
</comment>
<comment type="pathway">
    <text evidence="1">Cofactor biosynthesis; thiamine diphosphate biosynthesis; thiamine phosphate from 4-amino-2-methyl-5-diphosphomethylpyrimidine and 4-methyl-5-(2-phosphoethyl)-thiazole: step 1/1.</text>
</comment>
<comment type="similarity">
    <text evidence="1">Belongs to the thiamine-phosphate synthase family.</text>
</comment>